<sequence length="60" mass="7050">MFTLKKPLLLLFFLATINLSLCEQERNAEEERRDEPDERNAEVEKRFLPIVGKLLSLFGK</sequence>
<proteinExistence type="evidence at protein level"/>
<reference evidence="7" key="1">
    <citation type="journal article" date="2014" name="Zool. Sci.">
        <title>Peptidomic analysis of antimicrobial peptides in skin secretions of Amolops mantzorum.</title>
        <authorList>
            <person name="Hu Y."/>
            <person name="Yu Z."/>
            <person name="Xu S."/>
            <person name="Hu Y."/>
            <person name="Guo C."/>
            <person name="Li F."/>
            <person name="Li J."/>
            <person name="Liu J."/>
            <person name="Wang H."/>
        </authorList>
    </citation>
    <scope>NUCLEOTIDE SEQUENCE [MRNA]</scope>
    <scope>PROTEIN SEQUENCE OF 47-58</scope>
    <scope>SUBCELLULAR LOCATION</scope>
    <scope>IDENTIFICATION BY MASS SPECTROMETRY</scope>
    <scope>AMIDATION AT PHE-58</scope>
    <source>
        <tissue evidence="4">Skin</tissue>
        <tissue evidence="4">Skin secretion</tissue>
    </source>
</reference>
<evidence type="ECO:0000250" key="1">
    <source>
        <dbReference type="UniProtKB" id="P82848"/>
    </source>
</evidence>
<evidence type="ECO:0000255" key="2"/>
<evidence type="ECO:0000269" key="3">
    <source>
    </source>
</evidence>
<evidence type="ECO:0000303" key="4">
    <source>
    </source>
</evidence>
<evidence type="ECO:0000305" key="5"/>
<evidence type="ECO:0000305" key="6">
    <source>
    </source>
</evidence>
<evidence type="ECO:0000312" key="7">
    <source>
        <dbReference type="EMBL" id="ADM34280.1"/>
    </source>
</evidence>
<accession>E1B247</accession>
<dbReference type="EMBL" id="HQ128622">
    <property type="protein sequence ID" value="ADM34280.1"/>
    <property type="molecule type" value="mRNA"/>
</dbReference>
<dbReference type="GO" id="GO:0005576">
    <property type="term" value="C:extracellular region"/>
    <property type="evidence" value="ECO:0007669"/>
    <property type="project" value="UniProtKB-SubCell"/>
</dbReference>
<dbReference type="GO" id="GO:0006952">
    <property type="term" value="P:defense response"/>
    <property type="evidence" value="ECO:0007669"/>
    <property type="project" value="UniProtKB-KW"/>
</dbReference>
<dbReference type="InterPro" id="IPR004275">
    <property type="entry name" value="Frog_antimicrobial_propeptide"/>
</dbReference>
<dbReference type="Pfam" id="PF03032">
    <property type="entry name" value="FSAP_sig_propep"/>
    <property type="match status" value="1"/>
</dbReference>
<protein>
    <recommendedName>
        <fullName evidence="4">Temporin-MT5</fullName>
    </recommendedName>
</protein>
<name>TP5_AMOMA</name>
<organism evidence="7">
    <name type="scientific">Amolops mantzorum</name>
    <name type="common">Sichuan torrent frog</name>
    <dbReference type="NCBI Taxonomy" id="167930"/>
    <lineage>
        <taxon>Eukaryota</taxon>
        <taxon>Metazoa</taxon>
        <taxon>Chordata</taxon>
        <taxon>Craniata</taxon>
        <taxon>Vertebrata</taxon>
        <taxon>Euteleostomi</taxon>
        <taxon>Amphibia</taxon>
        <taxon>Batrachia</taxon>
        <taxon>Anura</taxon>
        <taxon>Neobatrachia</taxon>
        <taxon>Ranoidea</taxon>
        <taxon>Ranidae</taxon>
        <taxon>Amolops</taxon>
    </lineage>
</organism>
<comment type="function">
    <text evidence="1">Antimicrobial peptide.</text>
</comment>
<comment type="subcellular location">
    <subcellularLocation>
        <location evidence="2 3">Secreted</location>
    </subcellularLocation>
</comment>
<comment type="tissue specificity">
    <text evidence="6">Expressed by the skin glands.</text>
</comment>
<comment type="similarity">
    <text evidence="5">Belongs to the frog skin active peptide (FSAP) family. Temporin subfamily.</text>
</comment>
<feature type="signal peptide" evidence="2">
    <location>
        <begin position="1"/>
        <end position="22"/>
    </location>
</feature>
<feature type="propeptide" id="PRO_0000440090" description="Removed in mature form" evidence="6">
    <location>
        <begin position="23"/>
        <end position="44"/>
    </location>
</feature>
<feature type="peptide" id="PRO_0000440091" description="Temporin-MT5" evidence="3">
    <location>
        <begin position="47"/>
        <end position="58"/>
    </location>
</feature>
<feature type="modified residue" description="Phenylalanine amide" evidence="3">
    <location>
        <position position="58"/>
    </location>
</feature>
<keyword id="KW-0027">Amidation</keyword>
<keyword id="KW-0878">Amphibian defense peptide</keyword>
<keyword id="KW-0929">Antimicrobial</keyword>
<keyword id="KW-0165">Cleavage on pair of basic residues</keyword>
<keyword id="KW-0903">Direct protein sequencing</keyword>
<keyword id="KW-0964">Secreted</keyword>
<keyword id="KW-0732">Signal</keyword>